<protein>
    <recommendedName>
        <fullName evidence="1">Phosphomethylpyrimidine synthase</fullName>
        <ecNumber evidence="1">4.1.99.17</ecNumber>
    </recommendedName>
    <alternativeName>
        <fullName evidence="1">Hydroxymethylpyrimidine phosphate synthase</fullName>
        <shortName evidence="1">HMP-P synthase</shortName>
        <shortName evidence="1">HMP-phosphate synthase</shortName>
        <shortName evidence="1">HMPP synthase</shortName>
    </alternativeName>
    <alternativeName>
        <fullName evidence="1">Thiamine biosynthesis protein ThiC</fullName>
    </alternativeName>
</protein>
<feature type="chain" id="PRO_0000152816" description="Phosphomethylpyrimidine synthase">
    <location>
        <begin position="1"/>
        <end position="547"/>
    </location>
</feature>
<feature type="binding site" evidence="1">
    <location>
        <position position="146"/>
    </location>
    <ligand>
        <name>substrate</name>
    </ligand>
</feature>
<feature type="binding site" evidence="1">
    <location>
        <position position="175"/>
    </location>
    <ligand>
        <name>substrate</name>
    </ligand>
</feature>
<feature type="binding site" evidence="1">
    <location>
        <position position="204"/>
    </location>
    <ligand>
        <name>substrate</name>
    </ligand>
</feature>
<feature type="binding site" evidence="1">
    <location>
        <position position="240"/>
    </location>
    <ligand>
        <name>substrate</name>
    </ligand>
</feature>
<feature type="binding site" evidence="1">
    <location>
        <begin position="260"/>
        <end position="262"/>
    </location>
    <ligand>
        <name>substrate</name>
    </ligand>
</feature>
<feature type="binding site" evidence="1">
    <location>
        <begin position="301"/>
        <end position="304"/>
    </location>
    <ligand>
        <name>substrate</name>
    </ligand>
</feature>
<feature type="binding site" evidence="1">
    <location>
        <position position="340"/>
    </location>
    <ligand>
        <name>substrate</name>
    </ligand>
</feature>
<feature type="binding site" evidence="1">
    <location>
        <position position="344"/>
    </location>
    <ligand>
        <name>Zn(2+)</name>
        <dbReference type="ChEBI" id="CHEBI:29105"/>
    </ligand>
</feature>
<feature type="binding site" evidence="1">
    <location>
        <position position="367"/>
    </location>
    <ligand>
        <name>substrate</name>
    </ligand>
</feature>
<feature type="binding site" evidence="1">
    <location>
        <position position="408"/>
    </location>
    <ligand>
        <name>Zn(2+)</name>
        <dbReference type="ChEBI" id="CHEBI:29105"/>
    </ligand>
</feature>
<feature type="binding site" evidence="1">
    <location>
        <position position="488"/>
    </location>
    <ligand>
        <name>[4Fe-4S] cluster</name>
        <dbReference type="ChEBI" id="CHEBI:49883"/>
        <note>4Fe-4S-S-AdoMet</note>
    </ligand>
</feature>
<feature type="binding site" evidence="1">
    <location>
        <position position="491"/>
    </location>
    <ligand>
        <name>[4Fe-4S] cluster</name>
        <dbReference type="ChEBI" id="CHEBI:49883"/>
        <note>4Fe-4S-S-AdoMet</note>
    </ligand>
</feature>
<feature type="binding site" evidence="1">
    <location>
        <position position="496"/>
    </location>
    <ligand>
        <name>[4Fe-4S] cluster</name>
        <dbReference type="ChEBI" id="CHEBI:49883"/>
        <note>4Fe-4S-S-AdoMet</note>
    </ligand>
</feature>
<organism>
    <name type="scientific">Mycobacterium bovis (strain ATCC BAA-935 / AF2122/97)</name>
    <dbReference type="NCBI Taxonomy" id="233413"/>
    <lineage>
        <taxon>Bacteria</taxon>
        <taxon>Bacillati</taxon>
        <taxon>Actinomycetota</taxon>
        <taxon>Actinomycetes</taxon>
        <taxon>Mycobacteriales</taxon>
        <taxon>Mycobacteriaceae</taxon>
        <taxon>Mycobacterium</taxon>
        <taxon>Mycobacterium tuberculosis complex</taxon>
    </lineage>
</organism>
<reference key="1">
    <citation type="journal article" date="2003" name="Proc. Natl. Acad. Sci. U.S.A.">
        <title>The complete genome sequence of Mycobacterium bovis.</title>
        <authorList>
            <person name="Garnier T."/>
            <person name="Eiglmeier K."/>
            <person name="Camus J.-C."/>
            <person name="Medina N."/>
            <person name="Mansoor H."/>
            <person name="Pryor M."/>
            <person name="Duthoy S."/>
            <person name="Grondin S."/>
            <person name="Lacroix C."/>
            <person name="Monsempe C."/>
            <person name="Simon S."/>
            <person name="Harris B."/>
            <person name="Atkin R."/>
            <person name="Doggett J."/>
            <person name="Mayes R."/>
            <person name="Keating L."/>
            <person name="Wheeler P.R."/>
            <person name="Parkhill J."/>
            <person name="Barrell B.G."/>
            <person name="Cole S.T."/>
            <person name="Gordon S.V."/>
            <person name="Hewinson R.G."/>
        </authorList>
    </citation>
    <scope>NUCLEOTIDE SEQUENCE [LARGE SCALE GENOMIC DNA]</scope>
    <source>
        <strain>ATCC BAA-935 / AF2122/97</strain>
    </source>
</reference>
<reference key="2">
    <citation type="journal article" date="2017" name="Genome Announc.">
        <title>Updated reference genome sequence and annotation of Mycobacterium bovis AF2122/97.</title>
        <authorList>
            <person name="Malone K.M."/>
            <person name="Farrell D."/>
            <person name="Stuber T.P."/>
            <person name="Schubert O.T."/>
            <person name="Aebersold R."/>
            <person name="Robbe-Austerman S."/>
            <person name="Gordon S.V."/>
        </authorList>
    </citation>
    <scope>NUCLEOTIDE SEQUENCE [LARGE SCALE GENOMIC DNA]</scope>
    <scope>GENOME REANNOTATION</scope>
    <source>
        <strain>ATCC BAA-935 / AF2122/97</strain>
    </source>
</reference>
<evidence type="ECO:0000255" key="1">
    <source>
        <dbReference type="HAMAP-Rule" id="MF_00089"/>
    </source>
</evidence>
<sequence length="547" mass="59898">MTITVEPSVTTGPIAGSAKAYREIEAPGSGATLQVPFRRVHLSTGDHFDLYDTSGPYTDTDTVIDLTAGLPHRPGVVRDRGTQLQRARAGEITAEMAFIAAREDMSAELVRDEVARGRAVIPANHHHPESEPMIIGKAFAVKVNANIGNSAVTSSIAEEVDKMVWATRWGADTIMDLSTGKNIHETREWILRNSPVPVGTVPIYQALEKVKGDPTELTWEIYRDTVIEQCEQGVDYMTVHAGVLLRYVPLTAKRVTGIVSRGGSIMAAWCLAHHRESFLYTNFEELCDIFARYDVTFSLGDGLRPGSIADANDAAQFAELRTLGELTKIAKAHGAQVMIEGPGHIPMHKIVENVRLEEELCEEAPFYTLGPLATDIAPAYDHITSAIGAAIIAQAGTAMLCYVTPKEHLGLPDRKDVKDGVIAYKIAAHAADLAKGHPRAQERDDALSTARFEFRWNDQFALSLDPDTAREFHDETLPAEPAKTAHFCSMCGPKFCSMRITQDVREYAAEHGLETEADIEAVLAAGMAEKSREFAEHGNRVYLPITQ</sequence>
<proteinExistence type="inferred from homology"/>
<comment type="function">
    <text evidence="1">Catalyzes the synthesis of the hydroxymethylpyrimidine phosphate (HMP-P) moiety of thiamine from aminoimidazole ribotide (AIR) in a radical S-adenosyl-L-methionine (SAM)-dependent reaction.</text>
</comment>
<comment type="catalytic activity">
    <reaction evidence="1">
        <text>5-amino-1-(5-phospho-beta-D-ribosyl)imidazole + S-adenosyl-L-methionine = 4-amino-2-methyl-5-(phosphooxymethyl)pyrimidine + CO + 5'-deoxyadenosine + formate + L-methionine + 3 H(+)</text>
        <dbReference type="Rhea" id="RHEA:24840"/>
        <dbReference type="ChEBI" id="CHEBI:15378"/>
        <dbReference type="ChEBI" id="CHEBI:15740"/>
        <dbReference type="ChEBI" id="CHEBI:17245"/>
        <dbReference type="ChEBI" id="CHEBI:17319"/>
        <dbReference type="ChEBI" id="CHEBI:57844"/>
        <dbReference type="ChEBI" id="CHEBI:58354"/>
        <dbReference type="ChEBI" id="CHEBI:59789"/>
        <dbReference type="ChEBI" id="CHEBI:137981"/>
        <dbReference type="EC" id="4.1.99.17"/>
    </reaction>
</comment>
<comment type="cofactor">
    <cofactor evidence="1">
        <name>[4Fe-4S] cluster</name>
        <dbReference type="ChEBI" id="CHEBI:49883"/>
    </cofactor>
    <text evidence="1">Binds 1 [4Fe-4S] cluster per subunit. The cluster is coordinated with 3 cysteines and an exchangeable S-adenosyl-L-methionine.</text>
</comment>
<comment type="pathway">
    <text evidence="1">Cofactor biosynthesis; thiamine diphosphate biosynthesis.</text>
</comment>
<comment type="similarity">
    <text evidence="1">Belongs to the ThiC family.</text>
</comment>
<accession>P66912</accession>
<accession>A0A1R3XVV8</accession>
<accession>P96269</accession>
<accession>X2BF01</accession>
<keyword id="KW-0004">4Fe-4S</keyword>
<keyword id="KW-0408">Iron</keyword>
<keyword id="KW-0411">Iron-sulfur</keyword>
<keyword id="KW-0456">Lyase</keyword>
<keyword id="KW-0479">Metal-binding</keyword>
<keyword id="KW-1185">Reference proteome</keyword>
<keyword id="KW-0949">S-adenosyl-L-methionine</keyword>
<keyword id="KW-0784">Thiamine biosynthesis</keyword>
<keyword id="KW-0862">Zinc</keyword>
<dbReference type="EC" id="4.1.99.17" evidence="1"/>
<dbReference type="EMBL" id="LT708304">
    <property type="protein sequence ID" value="SIT99012.1"/>
    <property type="molecule type" value="Genomic_DNA"/>
</dbReference>
<dbReference type="RefSeq" id="NP_854094.1">
    <property type="nucleotide sequence ID" value="NC_002945.3"/>
</dbReference>
<dbReference type="RefSeq" id="WP_003900143.1">
    <property type="nucleotide sequence ID" value="NC_002945.4"/>
</dbReference>
<dbReference type="SMR" id="P66912"/>
<dbReference type="PATRIC" id="fig|233413.5.peg.470"/>
<dbReference type="UniPathway" id="UPA00060"/>
<dbReference type="Proteomes" id="UP000001419">
    <property type="component" value="Chromosome"/>
</dbReference>
<dbReference type="GO" id="GO:0005829">
    <property type="term" value="C:cytosol"/>
    <property type="evidence" value="ECO:0007669"/>
    <property type="project" value="TreeGrafter"/>
</dbReference>
<dbReference type="GO" id="GO:0051539">
    <property type="term" value="F:4 iron, 4 sulfur cluster binding"/>
    <property type="evidence" value="ECO:0007669"/>
    <property type="project" value="UniProtKB-KW"/>
</dbReference>
<dbReference type="GO" id="GO:0016830">
    <property type="term" value="F:carbon-carbon lyase activity"/>
    <property type="evidence" value="ECO:0007669"/>
    <property type="project" value="InterPro"/>
</dbReference>
<dbReference type="GO" id="GO:0008270">
    <property type="term" value="F:zinc ion binding"/>
    <property type="evidence" value="ECO:0007669"/>
    <property type="project" value="UniProtKB-UniRule"/>
</dbReference>
<dbReference type="GO" id="GO:0009228">
    <property type="term" value="P:thiamine biosynthetic process"/>
    <property type="evidence" value="ECO:0007669"/>
    <property type="project" value="UniProtKB-KW"/>
</dbReference>
<dbReference type="GO" id="GO:0009229">
    <property type="term" value="P:thiamine diphosphate biosynthetic process"/>
    <property type="evidence" value="ECO:0007669"/>
    <property type="project" value="UniProtKB-UniRule"/>
</dbReference>
<dbReference type="FunFam" id="3.20.20.540:FF:000001">
    <property type="entry name" value="Phosphomethylpyrimidine synthase"/>
    <property type="match status" value="1"/>
</dbReference>
<dbReference type="Gene3D" id="6.10.250.620">
    <property type="match status" value="1"/>
</dbReference>
<dbReference type="Gene3D" id="3.20.20.540">
    <property type="entry name" value="Radical SAM ThiC family, central domain"/>
    <property type="match status" value="1"/>
</dbReference>
<dbReference type="HAMAP" id="MF_00089">
    <property type="entry name" value="ThiC"/>
    <property type="match status" value="1"/>
</dbReference>
<dbReference type="InterPro" id="IPR037509">
    <property type="entry name" value="ThiC"/>
</dbReference>
<dbReference type="InterPro" id="IPR025747">
    <property type="entry name" value="ThiC-associated_dom"/>
</dbReference>
<dbReference type="InterPro" id="IPR038521">
    <property type="entry name" value="ThiC/Bza_core_dom"/>
</dbReference>
<dbReference type="InterPro" id="IPR002817">
    <property type="entry name" value="ThiC/BzaA/B"/>
</dbReference>
<dbReference type="NCBIfam" id="NF006763">
    <property type="entry name" value="PRK09284.1"/>
    <property type="match status" value="1"/>
</dbReference>
<dbReference type="NCBIfam" id="NF009895">
    <property type="entry name" value="PRK13352.1"/>
    <property type="match status" value="1"/>
</dbReference>
<dbReference type="NCBIfam" id="TIGR00190">
    <property type="entry name" value="thiC"/>
    <property type="match status" value="1"/>
</dbReference>
<dbReference type="PANTHER" id="PTHR30557:SF1">
    <property type="entry name" value="PHOSPHOMETHYLPYRIMIDINE SYNTHASE, CHLOROPLASTIC"/>
    <property type="match status" value="1"/>
</dbReference>
<dbReference type="PANTHER" id="PTHR30557">
    <property type="entry name" value="THIAMINE BIOSYNTHESIS PROTEIN THIC"/>
    <property type="match status" value="1"/>
</dbReference>
<dbReference type="Pfam" id="PF13667">
    <property type="entry name" value="ThiC-associated"/>
    <property type="match status" value="1"/>
</dbReference>
<dbReference type="Pfam" id="PF01964">
    <property type="entry name" value="ThiC_Rad_SAM"/>
    <property type="match status" value="1"/>
</dbReference>
<dbReference type="SFLD" id="SFLDF00407">
    <property type="entry name" value="phosphomethylpyrimidine_syntha"/>
    <property type="match status" value="1"/>
</dbReference>
<dbReference type="SFLD" id="SFLDG01114">
    <property type="entry name" value="phosphomethylpyrimidine_syntha"/>
    <property type="match status" value="1"/>
</dbReference>
<dbReference type="SFLD" id="SFLDS00113">
    <property type="entry name" value="Radical_SAM_Phosphomethylpyrim"/>
    <property type="match status" value="1"/>
</dbReference>
<gene>
    <name evidence="1" type="primary">thiC</name>
    <name type="ordered locus">BQ2027_MB0431C</name>
</gene>
<name>THIC_MYCBO</name>